<keyword id="KW-1185">Reference proteome</keyword>
<keyword id="KW-0687">Ribonucleoprotein</keyword>
<keyword id="KW-0689">Ribosomal protein</keyword>
<name>RL30_LACP7</name>
<organism>
    <name type="scientific">Lachnoclostridium phytofermentans (strain ATCC 700394 / DSM 18823 / ISDg)</name>
    <name type="common">Clostridium phytofermentans</name>
    <dbReference type="NCBI Taxonomy" id="357809"/>
    <lineage>
        <taxon>Bacteria</taxon>
        <taxon>Bacillati</taxon>
        <taxon>Bacillota</taxon>
        <taxon>Clostridia</taxon>
        <taxon>Lachnospirales</taxon>
        <taxon>Lachnospiraceae</taxon>
    </lineage>
</organism>
<reference key="1">
    <citation type="submission" date="2007-11" db="EMBL/GenBank/DDBJ databases">
        <title>Complete genome sequence of Clostridium phytofermentans ISDg.</title>
        <authorList>
            <person name="Leschine S.B."/>
            <person name="Warnick T.A."/>
            <person name="Blanchard J.L."/>
            <person name="Schnell D.J."/>
            <person name="Petit E.L."/>
            <person name="LaTouf W.G."/>
            <person name="Copeland A."/>
            <person name="Lucas S."/>
            <person name="Lapidus A."/>
            <person name="Barry K."/>
            <person name="Glavina del Rio T."/>
            <person name="Dalin E."/>
            <person name="Tice H."/>
            <person name="Pitluck S."/>
            <person name="Kiss H."/>
            <person name="Brettin T."/>
            <person name="Bruce D."/>
            <person name="Detter J.C."/>
            <person name="Han C."/>
            <person name="Kuske C."/>
            <person name="Schmutz J."/>
            <person name="Larimer F."/>
            <person name="Land M."/>
            <person name="Hauser L."/>
            <person name="Kyrpides N."/>
            <person name="Kim E.A."/>
            <person name="Richardson P."/>
        </authorList>
    </citation>
    <scope>NUCLEOTIDE SEQUENCE [LARGE SCALE GENOMIC DNA]</scope>
    <source>
        <strain>ATCC 700394 / DSM 18823 / ISDg</strain>
    </source>
</reference>
<dbReference type="EMBL" id="CP000885">
    <property type="protein sequence ID" value="ABX43996.1"/>
    <property type="molecule type" value="Genomic_DNA"/>
</dbReference>
<dbReference type="RefSeq" id="WP_012201644.1">
    <property type="nucleotide sequence ID" value="NC_010001.1"/>
</dbReference>
<dbReference type="SMR" id="A9KJH6"/>
<dbReference type="STRING" id="357809.Cphy_3649"/>
<dbReference type="KEGG" id="cpy:Cphy_3649"/>
<dbReference type="eggNOG" id="COG1841">
    <property type="taxonomic scope" value="Bacteria"/>
</dbReference>
<dbReference type="HOGENOM" id="CLU_131047_2_1_9"/>
<dbReference type="Proteomes" id="UP000000370">
    <property type="component" value="Chromosome"/>
</dbReference>
<dbReference type="GO" id="GO:0022625">
    <property type="term" value="C:cytosolic large ribosomal subunit"/>
    <property type="evidence" value="ECO:0007669"/>
    <property type="project" value="TreeGrafter"/>
</dbReference>
<dbReference type="GO" id="GO:0003735">
    <property type="term" value="F:structural constituent of ribosome"/>
    <property type="evidence" value="ECO:0007669"/>
    <property type="project" value="InterPro"/>
</dbReference>
<dbReference type="GO" id="GO:0006412">
    <property type="term" value="P:translation"/>
    <property type="evidence" value="ECO:0007669"/>
    <property type="project" value="UniProtKB-UniRule"/>
</dbReference>
<dbReference type="CDD" id="cd01658">
    <property type="entry name" value="Ribosomal_L30"/>
    <property type="match status" value="1"/>
</dbReference>
<dbReference type="FunFam" id="3.30.1390.20:FF:000001">
    <property type="entry name" value="50S ribosomal protein L30"/>
    <property type="match status" value="1"/>
</dbReference>
<dbReference type="Gene3D" id="3.30.1390.20">
    <property type="entry name" value="Ribosomal protein L30, ferredoxin-like fold domain"/>
    <property type="match status" value="1"/>
</dbReference>
<dbReference type="HAMAP" id="MF_01371_B">
    <property type="entry name" value="Ribosomal_uL30_B"/>
    <property type="match status" value="1"/>
</dbReference>
<dbReference type="InterPro" id="IPR036919">
    <property type="entry name" value="Ribo_uL30_ferredoxin-like_sf"/>
</dbReference>
<dbReference type="InterPro" id="IPR005996">
    <property type="entry name" value="Ribosomal_uL30_bac-type"/>
</dbReference>
<dbReference type="InterPro" id="IPR016082">
    <property type="entry name" value="Ribosomal_uL30_ferredoxin-like"/>
</dbReference>
<dbReference type="NCBIfam" id="TIGR01308">
    <property type="entry name" value="rpmD_bact"/>
    <property type="match status" value="1"/>
</dbReference>
<dbReference type="PANTHER" id="PTHR15892:SF2">
    <property type="entry name" value="LARGE RIBOSOMAL SUBUNIT PROTEIN UL30M"/>
    <property type="match status" value="1"/>
</dbReference>
<dbReference type="PANTHER" id="PTHR15892">
    <property type="entry name" value="MITOCHONDRIAL RIBOSOMAL PROTEIN L30"/>
    <property type="match status" value="1"/>
</dbReference>
<dbReference type="Pfam" id="PF00327">
    <property type="entry name" value="Ribosomal_L30"/>
    <property type="match status" value="1"/>
</dbReference>
<dbReference type="PIRSF" id="PIRSF002211">
    <property type="entry name" value="Ribosomal_L30_bac-type"/>
    <property type="match status" value="1"/>
</dbReference>
<dbReference type="SUPFAM" id="SSF55129">
    <property type="entry name" value="Ribosomal protein L30p/L7e"/>
    <property type="match status" value="1"/>
</dbReference>
<gene>
    <name evidence="1" type="primary">rpmD</name>
    <name type="ordered locus">Cphy_3649</name>
</gene>
<accession>A9KJH6</accession>
<protein>
    <recommendedName>
        <fullName evidence="1">Large ribosomal subunit protein uL30</fullName>
    </recommendedName>
    <alternativeName>
        <fullName evidence="2">50S ribosomal protein L30</fullName>
    </alternativeName>
</protein>
<proteinExistence type="inferred from homology"/>
<feature type="chain" id="PRO_1000087245" description="Large ribosomal subunit protein uL30">
    <location>
        <begin position="1"/>
        <end position="60"/>
    </location>
</feature>
<sequence>MANKLKITLTKSTIGALPKHKLTVSALGLGKLHSTNEVPDNVAIRGMLKQVKHLVMVEEI</sequence>
<evidence type="ECO:0000255" key="1">
    <source>
        <dbReference type="HAMAP-Rule" id="MF_01371"/>
    </source>
</evidence>
<evidence type="ECO:0000305" key="2"/>
<comment type="subunit">
    <text evidence="1">Part of the 50S ribosomal subunit.</text>
</comment>
<comment type="similarity">
    <text evidence="1">Belongs to the universal ribosomal protein uL30 family.</text>
</comment>